<dbReference type="EMBL" id="CP001043">
    <property type="protein sequence ID" value="ACC70842.1"/>
    <property type="molecule type" value="Genomic_DNA"/>
</dbReference>
<dbReference type="RefSeq" id="WP_012401052.1">
    <property type="nucleotide sequence ID" value="NC_010622.1"/>
</dbReference>
<dbReference type="SMR" id="B2JKL5"/>
<dbReference type="KEGG" id="bph:Bphy_1660"/>
<dbReference type="eggNOG" id="COG4702">
    <property type="taxonomic scope" value="Bacteria"/>
</dbReference>
<dbReference type="HOGENOM" id="CLU_101036_2_2_4"/>
<dbReference type="OrthoDB" id="9815315at2"/>
<dbReference type="Proteomes" id="UP000001192">
    <property type="component" value="Chromosome 1"/>
</dbReference>
<dbReference type="Gene3D" id="3.30.450.150">
    <property type="entry name" value="Haem-degrading domain"/>
    <property type="match status" value="1"/>
</dbReference>
<dbReference type="HAMAP" id="MF_00761">
    <property type="entry name" value="UPF0303"/>
    <property type="match status" value="1"/>
</dbReference>
<dbReference type="InterPro" id="IPR005624">
    <property type="entry name" value="PduO/GlcC-like"/>
</dbReference>
<dbReference type="InterPro" id="IPR038084">
    <property type="entry name" value="PduO/GlcC-like_sf"/>
</dbReference>
<dbReference type="InterPro" id="IPR010371">
    <property type="entry name" value="YBR137W-like"/>
</dbReference>
<dbReference type="NCBIfam" id="NF002695">
    <property type="entry name" value="PRK02487.1-4"/>
    <property type="match status" value="1"/>
</dbReference>
<dbReference type="NCBIfam" id="NF002696">
    <property type="entry name" value="PRK02487.1-5"/>
    <property type="match status" value="1"/>
</dbReference>
<dbReference type="PANTHER" id="PTHR28255">
    <property type="match status" value="1"/>
</dbReference>
<dbReference type="PANTHER" id="PTHR28255:SF1">
    <property type="entry name" value="UPF0303 PROTEIN YBR137W"/>
    <property type="match status" value="1"/>
</dbReference>
<dbReference type="Pfam" id="PF03928">
    <property type="entry name" value="HbpS-like"/>
    <property type="match status" value="1"/>
</dbReference>
<dbReference type="PIRSF" id="PIRSF008757">
    <property type="entry name" value="UCP008757"/>
    <property type="match status" value="1"/>
</dbReference>
<dbReference type="SUPFAM" id="SSF143744">
    <property type="entry name" value="GlcG-like"/>
    <property type="match status" value="1"/>
</dbReference>
<sequence>MDIAHDLQSIAAQEHALVFPHFDADTAWQLGAYLHEIAKARGLALAIDIRSFGQPLFFSLLEGATPDNVDWARRKGNTVAHFRRSSYAVGLKLQQSNATLADKHGLPVSDYAAHGGAFPLIAKGTGVIGSVTVSGLPQRADHELVVEALCAHLGHDYSKLALAKA</sequence>
<evidence type="ECO:0000255" key="1">
    <source>
        <dbReference type="HAMAP-Rule" id="MF_00761"/>
    </source>
</evidence>
<protein>
    <recommendedName>
        <fullName evidence="1">UPF0303 protein Bphy_1660</fullName>
    </recommendedName>
</protein>
<comment type="similarity">
    <text evidence="1">Belongs to the UPF0303 family.</text>
</comment>
<keyword id="KW-1185">Reference proteome</keyword>
<gene>
    <name type="ordered locus">Bphy_1660</name>
</gene>
<organism>
    <name type="scientific">Paraburkholderia phymatum (strain DSM 17167 / CIP 108236 / LMG 21445 / STM815)</name>
    <name type="common">Burkholderia phymatum</name>
    <dbReference type="NCBI Taxonomy" id="391038"/>
    <lineage>
        <taxon>Bacteria</taxon>
        <taxon>Pseudomonadati</taxon>
        <taxon>Pseudomonadota</taxon>
        <taxon>Betaproteobacteria</taxon>
        <taxon>Burkholderiales</taxon>
        <taxon>Burkholderiaceae</taxon>
        <taxon>Paraburkholderia</taxon>
    </lineage>
</organism>
<proteinExistence type="inferred from homology"/>
<accession>B2JKL5</accession>
<name>Y1660_PARP8</name>
<feature type="chain" id="PRO_1000198325" description="UPF0303 protein Bphy_1660">
    <location>
        <begin position="1"/>
        <end position="165"/>
    </location>
</feature>
<reference key="1">
    <citation type="journal article" date="2014" name="Stand. Genomic Sci.">
        <title>Complete genome sequence of Burkholderia phymatum STM815(T), a broad host range and efficient nitrogen-fixing symbiont of Mimosa species.</title>
        <authorList>
            <person name="Moulin L."/>
            <person name="Klonowska A."/>
            <person name="Caroline B."/>
            <person name="Booth K."/>
            <person name="Vriezen J.A."/>
            <person name="Melkonian R."/>
            <person name="James E.K."/>
            <person name="Young J.P."/>
            <person name="Bena G."/>
            <person name="Hauser L."/>
            <person name="Land M."/>
            <person name="Kyrpides N."/>
            <person name="Bruce D."/>
            <person name="Chain P."/>
            <person name="Copeland A."/>
            <person name="Pitluck S."/>
            <person name="Woyke T."/>
            <person name="Lizotte-Waniewski M."/>
            <person name="Bristow J."/>
            <person name="Riley M."/>
        </authorList>
    </citation>
    <scope>NUCLEOTIDE SEQUENCE [LARGE SCALE GENOMIC DNA]</scope>
    <source>
        <strain>DSM 17167 / CIP 108236 / LMG 21445 / STM815</strain>
    </source>
</reference>